<feature type="chain" id="PRO_0000310465" description="Ligand-dependent nuclear receptor corepressor-like protein">
    <location>
        <begin position="1"/>
        <end position="600"/>
    </location>
</feature>
<feature type="domain" description="HTH psq-type" evidence="2">
    <location>
        <begin position="514"/>
        <end position="566"/>
    </location>
</feature>
<feature type="DNA-binding region" description="H-T-H motif" evidence="2">
    <location>
        <begin position="542"/>
        <end position="562"/>
    </location>
</feature>
<feature type="region of interest" description="Disordered" evidence="3">
    <location>
        <begin position="1"/>
        <end position="24"/>
    </location>
</feature>
<feature type="region of interest" description="Disordered" evidence="3">
    <location>
        <begin position="102"/>
        <end position="122"/>
    </location>
</feature>
<feature type="region of interest" description="Disordered" evidence="3">
    <location>
        <begin position="495"/>
        <end position="519"/>
    </location>
</feature>
<feature type="region of interest" description="Disordered" evidence="3">
    <location>
        <begin position="581"/>
        <end position="600"/>
    </location>
</feature>
<feature type="compositionally biased region" description="Polar residues" evidence="3">
    <location>
        <begin position="104"/>
        <end position="122"/>
    </location>
</feature>
<feature type="compositionally biased region" description="Polar residues" evidence="3">
    <location>
        <begin position="583"/>
        <end position="600"/>
    </location>
</feature>
<dbReference type="EMBL" id="AJ720429">
    <property type="protein sequence ID" value="CAG32088.1"/>
    <property type="status" value="ALT_SEQ"/>
    <property type="molecule type" value="mRNA"/>
</dbReference>
<dbReference type="RefSeq" id="NP_001026331.2">
    <property type="nucleotide sequence ID" value="NM_001031160.3"/>
</dbReference>
<dbReference type="RefSeq" id="XP_015141205.1">
    <property type="nucleotide sequence ID" value="XM_015285719.1"/>
</dbReference>
<dbReference type="SMR" id="Q5ZJK5"/>
<dbReference type="FunCoup" id="Q5ZJK5">
    <property type="interactions" value="453"/>
</dbReference>
<dbReference type="STRING" id="9031.ENSGALP00000028143"/>
<dbReference type="PaxDb" id="9031-ENSGALP00000028143"/>
<dbReference type="GeneID" id="422820"/>
<dbReference type="KEGG" id="gga:422820"/>
<dbReference type="CTD" id="254251"/>
<dbReference type="VEuPathDB" id="HostDB:geneid_422820"/>
<dbReference type="eggNOG" id="KOG4565">
    <property type="taxonomic scope" value="Eukaryota"/>
</dbReference>
<dbReference type="HOGENOM" id="CLU_040042_0_0_1"/>
<dbReference type="InParanoid" id="Q5ZJK5"/>
<dbReference type="OMA" id="SLQYETH"/>
<dbReference type="OrthoDB" id="10028342at2759"/>
<dbReference type="PhylomeDB" id="Q5ZJK5"/>
<dbReference type="PRO" id="PR:Q5ZJK5"/>
<dbReference type="Proteomes" id="UP000000539">
    <property type="component" value="Chromosome 4"/>
</dbReference>
<dbReference type="Bgee" id="ENSGALG00000014421">
    <property type="expression patterns" value="Expressed in spermatid and 13 other cell types or tissues"/>
</dbReference>
<dbReference type="GO" id="GO:0005634">
    <property type="term" value="C:nucleus"/>
    <property type="evidence" value="ECO:0000318"/>
    <property type="project" value="GO_Central"/>
</dbReference>
<dbReference type="GO" id="GO:0003677">
    <property type="term" value="F:DNA binding"/>
    <property type="evidence" value="ECO:0007669"/>
    <property type="project" value="UniProtKB-KW"/>
</dbReference>
<dbReference type="GO" id="GO:0006357">
    <property type="term" value="P:regulation of transcription by RNA polymerase II"/>
    <property type="evidence" value="ECO:0000318"/>
    <property type="project" value="GO_Central"/>
</dbReference>
<dbReference type="FunFam" id="1.10.10.60:FF:000019">
    <property type="entry name" value="Ligand-dependent corepressor isoform 1"/>
    <property type="match status" value="1"/>
</dbReference>
<dbReference type="Gene3D" id="1.10.10.60">
    <property type="entry name" value="Homeodomain-like"/>
    <property type="match status" value="2"/>
</dbReference>
<dbReference type="InterPro" id="IPR009057">
    <property type="entry name" value="Homeodomain-like_sf"/>
</dbReference>
<dbReference type="InterPro" id="IPR007889">
    <property type="entry name" value="HTH_Psq"/>
</dbReference>
<dbReference type="PANTHER" id="PTHR21545:SF10">
    <property type="entry name" value="LIGAND-DEPENDENT NUCLEAR RECEPTOR COREPRESSOR-LIKE PROTEIN"/>
    <property type="match status" value="1"/>
</dbReference>
<dbReference type="PANTHER" id="PTHR21545">
    <property type="entry name" value="TRANSCRIPTION FACTOR MLR1/2"/>
    <property type="match status" value="1"/>
</dbReference>
<dbReference type="Pfam" id="PF05225">
    <property type="entry name" value="HTH_psq"/>
    <property type="match status" value="2"/>
</dbReference>
<dbReference type="SUPFAM" id="SSF46689">
    <property type="entry name" value="Homeodomain-like"/>
    <property type="match status" value="2"/>
</dbReference>
<dbReference type="PROSITE" id="PS50960">
    <property type="entry name" value="HTH_PSQ"/>
    <property type="match status" value="1"/>
</dbReference>
<evidence type="ECO:0000250" key="1"/>
<evidence type="ECO:0000255" key="2">
    <source>
        <dbReference type="PROSITE-ProRule" id="PRU00320"/>
    </source>
</evidence>
<evidence type="ECO:0000256" key="3">
    <source>
        <dbReference type="SAM" id="MobiDB-lite"/>
    </source>
</evidence>
<evidence type="ECO:0000305" key="4"/>
<gene>
    <name type="primary">LCORL</name>
    <name type="ORF">RCJMB04_17h17</name>
</gene>
<protein>
    <recommendedName>
        <fullName>Ligand-dependent nuclear receptor corepressor-like protein</fullName>
    </recommendedName>
</protein>
<organism>
    <name type="scientific">Gallus gallus</name>
    <name type="common">Chicken</name>
    <dbReference type="NCBI Taxonomy" id="9031"/>
    <lineage>
        <taxon>Eukaryota</taxon>
        <taxon>Metazoa</taxon>
        <taxon>Chordata</taxon>
        <taxon>Craniata</taxon>
        <taxon>Vertebrata</taxon>
        <taxon>Euteleostomi</taxon>
        <taxon>Archelosauria</taxon>
        <taxon>Archosauria</taxon>
        <taxon>Dinosauria</taxon>
        <taxon>Saurischia</taxon>
        <taxon>Theropoda</taxon>
        <taxon>Coelurosauria</taxon>
        <taxon>Aves</taxon>
        <taxon>Neognathae</taxon>
        <taxon>Galloanserae</taxon>
        <taxon>Galliformes</taxon>
        <taxon>Phasianidae</taxon>
        <taxon>Phasianinae</taxon>
        <taxon>Gallus</taxon>
    </lineage>
</organism>
<accession>Q5ZJK5</accession>
<reference key="1">
    <citation type="journal article" date="2005" name="Genome Biol.">
        <title>Full-length cDNAs from chicken bursal lymphocytes to facilitate gene function analysis.</title>
        <authorList>
            <person name="Caldwell R.B."/>
            <person name="Kierzek A.M."/>
            <person name="Arakawa H."/>
            <person name="Bezzubov Y."/>
            <person name="Zaim J."/>
            <person name="Fiedler P."/>
            <person name="Kutter S."/>
            <person name="Blagodatski A."/>
            <person name="Kostovska D."/>
            <person name="Koter M."/>
            <person name="Plachy J."/>
            <person name="Carninci P."/>
            <person name="Hayashizaki Y."/>
            <person name="Buerstedde J.-M."/>
        </authorList>
    </citation>
    <scope>NUCLEOTIDE SEQUENCE [LARGE SCALE MRNA]</scope>
    <source>
        <strain>CB</strain>
        <tissue>Bursa of Fabricius</tissue>
    </source>
</reference>
<proteinExistence type="evidence at transcript level"/>
<comment type="function">
    <text evidence="1">May act as transcription activator that binds DNA elements with the sequence 5'-CCCTATCGATCGATCTCTACCT-3'.</text>
</comment>
<comment type="subcellular location">
    <subcellularLocation>
        <location evidence="2">Nucleus</location>
    </subcellularLocation>
</comment>
<comment type="sequence caution" evidence="4">
    <conflict type="erroneous initiation">
        <sequence resource="EMBL-CDS" id="CAG32088"/>
    </conflict>
    <text>Truncated N-terminus.</text>
</comment>
<comment type="sequence caution" evidence="4">
    <conflict type="frameshift">
        <sequence resource="EMBL-CDS" id="CAG32088"/>
    </conflict>
</comment>
<sequence length="600" mass="67186">MEKGTDRMAAAAPAPPAAASQCRSPRCTAERRGVRRELDSWRHRLMHCVGFESILEGLYGPRLRRDLSLFEDCEPEELTDWSMDEKCSFCNLHKETVSDRASVIGSSQSTPTEELSSQGQSNTDKIECQAENYLNALFRKKDLPQNCDPNIPLVAQELMKKMIRQFAIEYISKSSKIQENRNGSSFEPSLICKSIQMNQTENSLQEEQDSPLDLTVNRTQEQNTQQGDGVLDLSTKKSARLEEPKYDPLCSENSVSGRLHRHREDYVERSAEFADGLLSKALKDIQSGALDINKAGILYGIPQKTLLLHLEALPAGKPAPFKNKTRDFNDSYSFKDSKETCAVLQKVALWARAQAERTEKSKLSLLETSELKFPTASSYLHQLTLQRMVTQFKEKSENLQYETTNPTVQLKIPQLRISSVSKPQSDTAGLLDVMYHVSKTSSVLEGSALQKLKNILPKQNKIECSGPVTHSSVDSYFLHGDLSPLCLNAKNGTVDGTSENTEDSLDRKDNKQPRKKRGRYRQYDHEIMEEAIAMVMSGKMSVSKAQGIYGVPHSTLEYKVKERSGTLKTPPKKKLRLPDTGLFNMTDSGTGSCKTSSKPV</sequence>
<keyword id="KW-0010">Activator</keyword>
<keyword id="KW-0238">DNA-binding</keyword>
<keyword id="KW-0539">Nucleus</keyword>
<keyword id="KW-1185">Reference proteome</keyword>
<keyword id="KW-0804">Transcription</keyword>
<keyword id="KW-0805">Transcription regulation</keyword>
<name>LCORL_CHICK</name>